<gene>
    <name evidence="9" type="primary">mdlA</name>
    <name evidence="8" type="synonym">Mdl</name>
</gene>
<protein>
    <recommendedName>
        <fullName evidence="8">Secreted mono- and diacylglycerol lipase A</fullName>
        <shortName evidence="8">MDGL</shortName>
        <ecNumber evidence="5">3.1.1.-</ecNumber>
    </recommendedName>
</protein>
<accession>P61869</accession>
<accession>D9ID42</accession>
<accession>P25234</accession>
<comment type="function">
    <text evidence="5">Secreted lipase strictly specific to mono- and diacylglycerol, but not triacylglycerol (PubMed:25051359). Shows the highest activity on 1,2-dibutyrin substrate (PubMed:25051359).</text>
</comment>
<comment type="catalytic activity">
    <reaction evidence="6">
        <text>a monoacylglycerol + H2O = glycerol + a fatty acid + H(+)</text>
        <dbReference type="Rhea" id="RHEA:15245"/>
        <dbReference type="ChEBI" id="CHEBI:15377"/>
        <dbReference type="ChEBI" id="CHEBI:15378"/>
        <dbReference type="ChEBI" id="CHEBI:17408"/>
        <dbReference type="ChEBI" id="CHEBI:17754"/>
        <dbReference type="ChEBI" id="CHEBI:28868"/>
    </reaction>
</comment>
<comment type="catalytic activity">
    <reaction evidence="6">
        <text>a diacylglycerol + H2O = a monoacylglycerol + a fatty acid + H(+)</text>
        <dbReference type="Rhea" id="RHEA:32731"/>
        <dbReference type="ChEBI" id="CHEBI:15377"/>
        <dbReference type="ChEBI" id="CHEBI:15378"/>
        <dbReference type="ChEBI" id="CHEBI:17408"/>
        <dbReference type="ChEBI" id="CHEBI:18035"/>
        <dbReference type="ChEBI" id="CHEBI:28868"/>
    </reaction>
</comment>
<comment type="activity regulation">
    <text evidence="5">The activity is inhibited by Hg(2+) and Fe(3+), but not significantly affected by EDTA or the other metal ions such as Na(+), K(+), Li(+), Mg(2+), Zn(2+), Ca(2+), Mn(2+), Cu(2+) and Fe(2+).</text>
</comment>
<comment type="biophysicochemical properties">
    <phDependence>
        <text evidence="5">Optimum pH is 7.5.</text>
    </phDependence>
    <temperatureDependence>
        <text evidence="5">Optimum temperature is 35 degrees Celsius.</text>
    </temperatureDependence>
</comment>
<comment type="subcellular location">
    <subcellularLocation>
        <location evidence="5">Secreted</location>
    </subcellularLocation>
</comment>
<comment type="domain">
    <text evidence="5">Residue Phe-302, localized near active sites, is a bulky residue that modulates substrate specificity and especially act as steric hindrances for triacylglycerol binding.</text>
</comment>
<comment type="similarity">
    <text evidence="10">Belongs to the AB hydrolase superfamily. Lipase family. Class 3 subfamily.</text>
</comment>
<organism>
    <name type="scientific">Penicillium cyclopium</name>
    <dbReference type="NCBI Taxonomy" id="60167"/>
    <lineage>
        <taxon>Eukaryota</taxon>
        <taxon>Fungi</taxon>
        <taxon>Dikarya</taxon>
        <taxon>Ascomycota</taxon>
        <taxon>Pezizomycotina</taxon>
        <taxon>Eurotiomycetes</taxon>
        <taxon>Eurotiomycetidae</taxon>
        <taxon>Eurotiales</taxon>
        <taxon>Aspergillaceae</taxon>
        <taxon>Penicillium</taxon>
    </lineage>
</organism>
<sequence>MRLSFFTALSAVASLGYALPGKLQSRDVSTSELDQFEFWVQYAAASYYEADYTAQVGDKLSCSKGNCPEVEATGATVSYDFSDSTITDTAGYIAVDHTNSAVVLAFRGSYSVRNWVADATFVHTNPGLCDGCLAELGFWSSWKLVRDDIIKELKEVVAQNPNYELVVVGHSLGAAVATLAATDLRGKGYPSAKLYAYASPRVGNAALAKYITAQGNNFRFTHTNDPVPKLPLLSMGYVHVSPEYWITSPNNATVSTSDIKVIDGDVSFDGNTGTGLPLLTDFEAHIWYFVQVDAGKGPGLPFKRV</sequence>
<evidence type="ECO:0000250" key="1"/>
<evidence type="ECO:0000250" key="2">
    <source>
        <dbReference type="UniProtKB" id="P61870"/>
    </source>
</evidence>
<evidence type="ECO:0000255" key="3"/>
<evidence type="ECO:0000255" key="4">
    <source>
        <dbReference type="PROSITE-ProRule" id="PRU00498"/>
    </source>
</evidence>
<evidence type="ECO:0000269" key="5">
    <source>
    </source>
</evidence>
<evidence type="ECO:0000269" key="6">
    <source ref="1"/>
</evidence>
<evidence type="ECO:0000269" key="7">
    <source ref="3"/>
</evidence>
<evidence type="ECO:0000303" key="8">
    <source>
    </source>
</evidence>
<evidence type="ECO:0000303" key="9">
    <source ref="1"/>
</evidence>
<evidence type="ECO:0000305" key="10"/>
<evidence type="ECO:0007744" key="11">
    <source>
        <dbReference type="PDB" id="5CH8"/>
    </source>
</evidence>
<evidence type="ECO:0007829" key="12">
    <source>
        <dbReference type="PDB" id="5CH8"/>
    </source>
</evidence>
<reference key="1">
    <citation type="submission" date="2000-07" db="EMBL/GenBank/DDBJ databases">
        <title>Cloning and structure of the mono- and diacylglycerol lipase-encoding gene from Penicillium cyclopium PG37.</title>
        <authorList>
            <person name="Wu M.C."/>
            <person name="Li J.H."/>
            <person name="Qian Z.K."/>
            <person name="Min T.S."/>
            <person name="Sun C.R."/>
            <person name="Huang W.D."/>
        </authorList>
    </citation>
    <scope>NUCLEOTIDE SEQUENCE [GENOMIC DNA]</scope>
    <source>
        <strain>PG37</strain>
    </source>
</reference>
<reference key="2">
    <citation type="journal article" date="2014" name="PLoS ONE">
        <title>A unique mono- and diacylglycerol lipase from Penicillium cyclopium: heterologous expression, biochemical characterization and molecular basis for its substrate selectivity.</title>
        <authorList>
            <person name="Tan Z.B."/>
            <person name="Li J.F."/>
            <person name="Li X.T."/>
            <person name="Gu Y."/>
            <person name="Wu M.C."/>
            <person name="Wu J."/>
            <person name="Wang J.Q."/>
        </authorList>
    </citation>
    <scope>NUCLEOTIDE SEQUENCE [MRNA]</scope>
    <scope>CATALYTIC ACTIVITY</scope>
    <scope>BIOPHYSICOCHEMICAL PROPERTIES</scope>
    <scope>ACTIVITY REGULATION</scope>
    <scope>SUBCELLULAR LOCATION</scope>
    <source>
        <strain>PG37</strain>
    </source>
</reference>
<reference evidence="11" key="3">
    <citation type="journal article" date="2016" name="ChemistrySelect">
        <title>Lipase-driven epoxidation is a two-stage synergistic process.</title>
        <authorList>
            <person name="Tang Q."/>
            <person name="Popowicz G.M."/>
            <person name="Wang X."/>
            <person name="Liu J."/>
            <person name="Pavlidis I.V."/>
            <person name="Wang Y."/>
        </authorList>
    </citation>
    <scope>X-RAY CRYSTALLOGRAPHY (1.62 ANGSTROMS) OF 27-305 IN COMPLEX WITH ZN(2+)</scope>
    <scope>ACTIVE SITE</scope>
    <scope>MUTAGENESIS OF SER-171 AND HIS-285</scope>
</reference>
<proteinExistence type="evidence at protein level"/>
<dbReference type="EC" id="3.1.1.-" evidence="5"/>
<dbReference type="EMBL" id="AF288219">
    <property type="protein sequence ID" value="AAF99710.1"/>
    <property type="molecule type" value="Genomic_DNA"/>
</dbReference>
<dbReference type="EMBL" id="HM135194">
    <property type="protein sequence ID" value="ADI99789.1"/>
    <property type="molecule type" value="mRNA"/>
</dbReference>
<dbReference type="PIR" id="JQ1188">
    <property type="entry name" value="JQ1188"/>
</dbReference>
<dbReference type="PDB" id="5CH8">
    <property type="method" value="X-ray"/>
    <property type="resolution" value="1.62 A"/>
    <property type="chains" value="A=27-305"/>
</dbReference>
<dbReference type="PDBsum" id="5CH8"/>
<dbReference type="SMR" id="P61869"/>
<dbReference type="ESTHER" id="penca-mdgli">
    <property type="family name" value="Lipase_3"/>
</dbReference>
<dbReference type="GlyCosmos" id="P61869">
    <property type="glycosylation" value="1 site, No reported glycans"/>
</dbReference>
<dbReference type="GO" id="GO:0005576">
    <property type="term" value="C:extracellular region"/>
    <property type="evidence" value="ECO:0007669"/>
    <property type="project" value="UniProtKB-SubCell"/>
</dbReference>
<dbReference type="GO" id="GO:0120516">
    <property type="term" value="F:diacylglycerol lipase activity"/>
    <property type="evidence" value="ECO:0007669"/>
    <property type="project" value="RHEA"/>
</dbReference>
<dbReference type="GO" id="GO:0046872">
    <property type="term" value="F:metal ion binding"/>
    <property type="evidence" value="ECO:0007669"/>
    <property type="project" value="UniProtKB-KW"/>
</dbReference>
<dbReference type="GO" id="GO:0047372">
    <property type="term" value="F:monoacylglycerol lipase activity"/>
    <property type="evidence" value="ECO:0007669"/>
    <property type="project" value="RHEA"/>
</dbReference>
<dbReference type="GO" id="GO:0017000">
    <property type="term" value="P:antibiotic biosynthetic process"/>
    <property type="evidence" value="ECO:0007669"/>
    <property type="project" value="UniProtKB-ARBA"/>
</dbReference>
<dbReference type="GO" id="GO:0016042">
    <property type="term" value="P:lipid catabolic process"/>
    <property type="evidence" value="ECO:0007669"/>
    <property type="project" value="UniProtKB-KW"/>
</dbReference>
<dbReference type="GO" id="GO:0072330">
    <property type="term" value="P:monocarboxylic acid biosynthetic process"/>
    <property type="evidence" value="ECO:0007669"/>
    <property type="project" value="UniProtKB-ARBA"/>
</dbReference>
<dbReference type="CDD" id="cd00519">
    <property type="entry name" value="Lipase_3"/>
    <property type="match status" value="1"/>
</dbReference>
<dbReference type="Gene3D" id="3.40.50.1820">
    <property type="entry name" value="alpha/beta hydrolase"/>
    <property type="match status" value="1"/>
</dbReference>
<dbReference type="InterPro" id="IPR029058">
    <property type="entry name" value="AB_hydrolase_fold"/>
</dbReference>
<dbReference type="InterPro" id="IPR051299">
    <property type="entry name" value="AB_hydrolase_lip/est"/>
</dbReference>
<dbReference type="InterPro" id="IPR002921">
    <property type="entry name" value="Fungal_lipase-type"/>
</dbReference>
<dbReference type="InterPro" id="IPR005592">
    <property type="entry name" value="Mono/diacylglycerol_lipase_N"/>
</dbReference>
<dbReference type="PANTHER" id="PTHR46640:SF1">
    <property type="entry name" value="FUNGAL LIPASE-LIKE DOMAIN-CONTAINING PROTEIN-RELATED"/>
    <property type="match status" value="1"/>
</dbReference>
<dbReference type="PANTHER" id="PTHR46640">
    <property type="entry name" value="TRIACYLGLYCEROL LIPASE, PUTATIVE (AFU_ORTHOLOGUE AFUA_6G06510)-RELATED"/>
    <property type="match status" value="1"/>
</dbReference>
<dbReference type="Pfam" id="PF03893">
    <property type="entry name" value="Lipase3_N"/>
    <property type="match status" value="1"/>
</dbReference>
<dbReference type="Pfam" id="PF01764">
    <property type="entry name" value="Lipase_3"/>
    <property type="match status" value="1"/>
</dbReference>
<dbReference type="SUPFAM" id="SSF53474">
    <property type="entry name" value="alpha/beta-Hydrolases"/>
    <property type="match status" value="1"/>
</dbReference>
<dbReference type="PROSITE" id="PS00120">
    <property type="entry name" value="LIPASE_SER"/>
    <property type="match status" value="1"/>
</dbReference>
<keyword id="KW-0002">3D-structure</keyword>
<keyword id="KW-1015">Disulfide bond</keyword>
<keyword id="KW-0325">Glycoprotein</keyword>
<keyword id="KW-0378">Hydrolase</keyword>
<keyword id="KW-0442">Lipid degradation</keyword>
<keyword id="KW-0443">Lipid metabolism</keyword>
<keyword id="KW-0479">Metal-binding</keyword>
<keyword id="KW-0964">Secreted</keyword>
<keyword id="KW-0732">Signal</keyword>
<keyword id="KW-0862">Zinc</keyword>
<keyword id="KW-0865">Zymogen</keyword>
<feature type="signal peptide" evidence="3">
    <location>
        <begin position="1"/>
        <end position="18"/>
    </location>
</feature>
<feature type="chain" id="PRO_0000017762" description="Secreted mono- and diacylglycerol lipase A">
    <location>
        <begin position="19"/>
        <end position="302"/>
    </location>
</feature>
<feature type="propeptide" id="PRO_0000017763" description="Removed in mature form" evidence="1">
    <location>
        <begin position="303"/>
        <end position="305"/>
    </location>
</feature>
<feature type="active site" description="Nucleophile" evidence="7">
    <location>
        <position position="171"/>
    </location>
</feature>
<feature type="active site" description="Charge relay system" evidence="2">
    <location>
        <position position="225"/>
    </location>
</feature>
<feature type="active site" description="Charge relay system" evidence="7">
    <location>
        <position position="285"/>
    </location>
</feature>
<feature type="binding site" evidence="7 11">
    <location>
        <position position="263"/>
    </location>
    <ligand>
        <name>Zn(2+)</name>
        <dbReference type="ChEBI" id="CHEBI:29105"/>
    </ligand>
</feature>
<feature type="binding site" evidence="7 11">
    <location>
        <position position="265"/>
    </location>
    <ligand>
        <name>Zn(2+)</name>
        <dbReference type="ChEBI" id="CHEBI:29105"/>
    </ligand>
</feature>
<feature type="glycosylation site" description="N-linked (GlcNAc...) asparagine" evidence="4">
    <location>
        <position position="251"/>
    </location>
</feature>
<feature type="disulfide bond" evidence="2">
    <location>
        <begin position="62"/>
        <end position="67"/>
    </location>
</feature>
<feature type="disulfide bond" evidence="2">
    <location>
        <begin position="129"/>
        <end position="132"/>
    </location>
</feature>
<feature type="mutagenesis site" description="Retains a fraction of activity." evidence="7">
    <original>S</original>
    <variation>A</variation>
    <location>
        <position position="171"/>
    </location>
</feature>
<feature type="mutagenesis site" description="Totally abolishes catalytic activity." evidence="7">
    <original>H</original>
    <variation>A</variation>
    <location>
        <position position="285"/>
    </location>
</feature>
<feature type="helix" evidence="12">
    <location>
        <begin position="30"/>
        <end position="45"/>
    </location>
</feature>
<feature type="helix" evidence="12">
    <location>
        <begin position="49"/>
        <end position="52"/>
    </location>
</feature>
<feature type="helix" evidence="12">
    <location>
        <begin position="68"/>
        <end position="72"/>
    </location>
</feature>
<feature type="strand" evidence="12">
    <location>
        <begin position="76"/>
        <end position="81"/>
    </location>
</feature>
<feature type="strand" evidence="12">
    <location>
        <begin position="90"/>
        <end position="96"/>
    </location>
</feature>
<feature type="turn" evidence="12">
    <location>
        <begin position="97"/>
        <end position="100"/>
    </location>
</feature>
<feature type="strand" evidence="12">
    <location>
        <begin position="101"/>
        <end position="107"/>
    </location>
</feature>
<feature type="helix" evidence="12">
    <location>
        <begin position="112"/>
        <end position="118"/>
    </location>
</feature>
<feature type="strand" evidence="12">
    <location>
        <begin position="127"/>
        <end position="129"/>
    </location>
</feature>
<feature type="helix" evidence="12">
    <location>
        <begin position="136"/>
        <end position="159"/>
    </location>
</feature>
<feature type="strand" evidence="12">
    <location>
        <begin position="164"/>
        <end position="170"/>
    </location>
</feature>
<feature type="helix" evidence="12">
    <location>
        <begin position="172"/>
        <end position="185"/>
    </location>
</feature>
<feature type="turn" evidence="12">
    <location>
        <begin position="186"/>
        <end position="188"/>
    </location>
</feature>
<feature type="strand" evidence="12">
    <location>
        <begin position="193"/>
        <end position="197"/>
    </location>
</feature>
<feature type="helix" evidence="12">
    <location>
        <begin position="205"/>
        <end position="214"/>
    </location>
</feature>
<feature type="strand" evidence="12">
    <location>
        <begin position="217"/>
        <end position="222"/>
    </location>
</feature>
<feature type="helix" evidence="12">
    <location>
        <begin position="227"/>
        <end position="229"/>
    </location>
</feature>
<feature type="helix" evidence="12">
    <location>
        <begin position="233"/>
        <end position="235"/>
    </location>
</feature>
<feature type="strand" evidence="12">
    <location>
        <begin position="243"/>
        <end position="246"/>
    </location>
</feature>
<feature type="helix" evidence="12">
    <location>
        <begin position="256"/>
        <end position="258"/>
    </location>
</feature>
<feature type="strand" evidence="12">
    <location>
        <begin position="259"/>
        <end position="262"/>
    </location>
</feature>
<feature type="strand" evidence="12">
    <location>
        <begin position="264"/>
        <end position="266"/>
    </location>
</feature>
<feature type="helix" evidence="12">
    <location>
        <begin position="270"/>
        <end position="274"/>
    </location>
</feature>
<feature type="helix" evidence="12">
    <location>
        <begin position="279"/>
        <end position="285"/>
    </location>
</feature>
<feature type="strand" evidence="12">
    <location>
        <begin position="287"/>
        <end position="291"/>
    </location>
</feature>
<feature type="turn" evidence="12">
    <location>
        <begin position="292"/>
        <end position="295"/>
    </location>
</feature>
<name>MDLA_PENCY</name>